<evidence type="ECO:0000255" key="1">
    <source>
        <dbReference type="HAMAP-Rule" id="MF_01274"/>
    </source>
</evidence>
<organism>
    <name type="scientific">Salinispora arenicola (strain CNS-205)</name>
    <dbReference type="NCBI Taxonomy" id="391037"/>
    <lineage>
        <taxon>Bacteria</taxon>
        <taxon>Bacillati</taxon>
        <taxon>Actinomycetota</taxon>
        <taxon>Actinomycetes</taxon>
        <taxon>Micromonosporales</taxon>
        <taxon>Micromonosporaceae</taxon>
        <taxon>Salinispora</taxon>
    </lineage>
</organism>
<sequence length="252" mass="27140">MLLCIDIGNTNTVLATFDGDELVHSWRIKTDALSTADELGLMFRGLLAGDAVEVTGVAACSTVPTALRSVRTMLDRYYPDLPHMIVEPGVRTGVQLAIDNPKEVGADRVVNTLATYTLYGGPSIVVDFGTTTNFDVISGRGEFLGGAFAPGIEISFDALAARAAQLRKVEATRPRSVIGKNTVECLQAGLYFGFAGQVDRIVERMVEELGDVRAVIATGGLAPLVIKECRTITHHEPMITLIGLRMVYDRNV</sequence>
<proteinExistence type="inferred from homology"/>
<dbReference type="EC" id="2.7.1.33" evidence="1"/>
<dbReference type="EMBL" id="CP000850">
    <property type="protein sequence ID" value="ABW00467.1"/>
    <property type="molecule type" value="Genomic_DNA"/>
</dbReference>
<dbReference type="SMR" id="A8M8E8"/>
<dbReference type="STRING" id="391037.Sare_4713"/>
<dbReference type="KEGG" id="saq:Sare_4713"/>
<dbReference type="PATRIC" id="fig|391037.6.peg.4763"/>
<dbReference type="eggNOG" id="COG1521">
    <property type="taxonomic scope" value="Bacteria"/>
</dbReference>
<dbReference type="HOGENOM" id="CLU_066627_1_0_11"/>
<dbReference type="OrthoDB" id="9804707at2"/>
<dbReference type="UniPathway" id="UPA00241">
    <property type="reaction ID" value="UER00352"/>
</dbReference>
<dbReference type="GO" id="GO:0005737">
    <property type="term" value="C:cytoplasm"/>
    <property type="evidence" value="ECO:0007669"/>
    <property type="project" value="UniProtKB-SubCell"/>
</dbReference>
<dbReference type="GO" id="GO:0005524">
    <property type="term" value="F:ATP binding"/>
    <property type="evidence" value="ECO:0007669"/>
    <property type="project" value="UniProtKB-UniRule"/>
</dbReference>
<dbReference type="GO" id="GO:0046872">
    <property type="term" value="F:metal ion binding"/>
    <property type="evidence" value="ECO:0007669"/>
    <property type="project" value="UniProtKB-KW"/>
</dbReference>
<dbReference type="GO" id="GO:0004594">
    <property type="term" value="F:pantothenate kinase activity"/>
    <property type="evidence" value="ECO:0007669"/>
    <property type="project" value="UniProtKB-UniRule"/>
</dbReference>
<dbReference type="GO" id="GO:0015937">
    <property type="term" value="P:coenzyme A biosynthetic process"/>
    <property type="evidence" value="ECO:0007669"/>
    <property type="project" value="UniProtKB-UniRule"/>
</dbReference>
<dbReference type="CDD" id="cd24015">
    <property type="entry name" value="ASKHA_NBD_PanK-III"/>
    <property type="match status" value="1"/>
</dbReference>
<dbReference type="Gene3D" id="3.30.420.40">
    <property type="match status" value="2"/>
</dbReference>
<dbReference type="HAMAP" id="MF_01274">
    <property type="entry name" value="Pantothen_kinase_3"/>
    <property type="match status" value="1"/>
</dbReference>
<dbReference type="InterPro" id="IPR043129">
    <property type="entry name" value="ATPase_NBD"/>
</dbReference>
<dbReference type="InterPro" id="IPR004619">
    <property type="entry name" value="Type_III_PanK"/>
</dbReference>
<dbReference type="NCBIfam" id="TIGR00671">
    <property type="entry name" value="baf"/>
    <property type="match status" value="1"/>
</dbReference>
<dbReference type="NCBIfam" id="NF009845">
    <property type="entry name" value="PRK13318.1-3"/>
    <property type="match status" value="1"/>
</dbReference>
<dbReference type="NCBIfam" id="NF009855">
    <property type="entry name" value="PRK13321.1"/>
    <property type="match status" value="1"/>
</dbReference>
<dbReference type="PANTHER" id="PTHR34265">
    <property type="entry name" value="TYPE III PANTOTHENATE KINASE"/>
    <property type="match status" value="1"/>
</dbReference>
<dbReference type="PANTHER" id="PTHR34265:SF1">
    <property type="entry name" value="TYPE III PANTOTHENATE KINASE"/>
    <property type="match status" value="1"/>
</dbReference>
<dbReference type="Pfam" id="PF03309">
    <property type="entry name" value="Pan_kinase"/>
    <property type="match status" value="1"/>
</dbReference>
<dbReference type="SUPFAM" id="SSF53067">
    <property type="entry name" value="Actin-like ATPase domain"/>
    <property type="match status" value="2"/>
</dbReference>
<gene>
    <name evidence="1" type="primary">coaX</name>
    <name type="ordered locus">Sare_4713</name>
</gene>
<keyword id="KW-0067">ATP-binding</keyword>
<keyword id="KW-0173">Coenzyme A biosynthesis</keyword>
<keyword id="KW-0963">Cytoplasm</keyword>
<keyword id="KW-0418">Kinase</keyword>
<keyword id="KW-0479">Metal-binding</keyword>
<keyword id="KW-0547">Nucleotide-binding</keyword>
<keyword id="KW-0630">Potassium</keyword>
<keyword id="KW-0808">Transferase</keyword>
<protein>
    <recommendedName>
        <fullName evidence="1">Type III pantothenate kinase</fullName>
        <ecNumber evidence="1">2.7.1.33</ecNumber>
    </recommendedName>
    <alternativeName>
        <fullName evidence="1">PanK-III</fullName>
    </alternativeName>
    <alternativeName>
        <fullName evidence="1">Pantothenic acid kinase</fullName>
    </alternativeName>
</protein>
<comment type="function">
    <text evidence="1">Catalyzes the phosphorylation of pantothenate (Pan), the first step in CoA biosynthesis.</text>
</comment>
<comment type="catalytic activity">
    <reaction evidence="1">
        <text>(R)-pantothenate + ATP = (R)-4'-phosphopantothenate + ADP + H(+)</text>
        <dbReference type="Rhea" id="RHEA:16373"/>
        <dbReference type="ChEBI" id="CHEBI:10986"/>
        <dbReference type="ChEBI" id="CHEBI:15378"/>
        <dbReference type="ChEBI" id="CHEBI:29032"/>
        <dbReference type="ChEBI" id="CHEBI:30616"/>
        <dbReference type="ChEBI" id="CHEBI:456216"/>
        <dbReference type="EC" id="2.7.1.33"/>
    </reaction>
</comment>
<comment type="cofactor">
    <cofactor evidence="1">
        <name>NH4(+)</name>
        <dbReference type="ChEBI" id="CHEBI:28938"/>
    </cofactor>
    <cofactor evidence="1">
        <name>K(+)</name>
        <dbReference type="ChEBI" id="CHEBI:29103"/>
    </cofactor>
    <text evidence="1">A monovalent cation. Ammonium or potassium.</text>
</comment>
<comment type="pathway">
    <text evidence="1">Cofactor biosynthesis; coenzyme A biosynthesis; CoA from (R)-pantothenate: step 1/5.</text>
</comment>
<comment type="subunit">
    <text evidence="1">Homodimer.</text>
</comment>
<comment type="subcellular location">
    <subcellularLocation>
        <location evidence="1">Cytoplasm</location>
    </subcellularLocation>
</comment>
<comment type="similarity">
    <text evidence="1">Belongs to the type III pantothenate kinase family.</text>
</comment>
<feature type="chain" id="PRO_1000085860" description="Type III pantothenate kinase">
    <location>
        <begin position="1"/>
        <end position="252"/>
    </location>
</feature>
<feature type="active site" description="Proton acceptor" evidence="1">
    <location>
        <position position="107"/>
    </location>
</feature>
<feature type="binding site" evidence="1">
    <location>
        <begin position="6"/>
        <end position="13"/>
    </location>
    <ligand>
        <name>ATP</name>
        <dbReference type="ChEBI" id="CHEBI:30616"/>
    </ligand>
</feature>
<feature type="binding site" evidence="1">
    <location>
        <begin position="105"/>
        <end position="108"/>
    </location>
    <ligand>
        <name>substrate</name>
    </ligand>
</feature>
<feature type="binding site" evidence="1">
    <location>
        <position position="127"/>
    </location>
    <ligand>
        <name>K(+)</name>
        <dbReference type="ChEBI" id="CHEBI:29103"/>
    </ligand>
</feature>
<feature type="binding site" evidence="1">
    <location>
        <position position="130"/>
    </location>
    <ligand>
        <name>ATP</name>
        <dbReference type="ChEBI" id="CHEBI:30616"/>
    </ligand>
</feature>
<feature type="binding site" evidence="1">
    <location>
        <position position="182"/>
    </location>
    <ligand>
        <name>substrate</name>
    </ligand>
</feature>
<reference key="1">
    <citation type="submission" date="2007-10" db="EMBL/GenBank/DDBJ databases">
        <title>Complete sequence of Salinispora arenicola CNS-205.</title>
        <authorList>
            <consortium name="US DOE Joint Genome Institute"/>
            <person name="Copeland A."/>
            <person name="Lucas S."/>
            <person name="Lapidus A."/>
            <person name="Barry K."/>
            <person name="Glavina del Rio T."/>
            <person name="Dalin E."/>
            <person name="Tice H."/>
            <person name="Pitluck S."/>
            <person name="Foster B."/>
            <person name="Schmutz J."/>
            <person name="Larimer F."/>
            <person name="Land M."/>
            <person name="Hauser L."/>
            <person name="Kyrpides N."/>
            <person name="Ivanova N."/>
            <person name="Jensen P.R."/>
            <person name="Moore B.S."/>
            <person name="Penn K."/>
            <person name="Jenkins C."/>
            <person name="Udwary D."/>
            <person name="Xiang L."/>
            <person name="Gontang E."/>
            <person name="Richardson P."/>
        </authorList>
    </citation>
    <scope>NUCLEOTIDE SEQUENCE [LARGE SCALE GENOMIC DNA]</scope>
    <source>
        <strain>CNS-205</strain>
    </source>
</reference>
<name>COAX_SALAI</name>
<accession>A8M8E8</accession>